<name>PGK_ANADE</name>
<feature type="chain" id="PRO_1000057957" description="Phosphoglycerate kinase">
    <location>
        <begin position="1"/>
        <end position="396"/>
    </location>
</feature>
<feature type="binding site" evidence="1">
    <location>
        <begin position="21"/>
        <end position="23"/>
    </location>
    <ligand>
        <name>substrate</name>
    </ligand>
</feature>
<feature type="binding site" evidence="1">
    <location>
        <position position="37"/>
    </location>
    <ligand>
        <name>substrate</name>
    </ligand>
</feature>
<feature type="binding site" evidence="1">
    <location>
        <begin position="60"/>
        <end position="63"/>
    </location>
    <ligand>
        <name>substrate</name>
    </ligand>
</feature>
<feature type="binding site" evidence="1">
    <location>
        <position position="121"/>
    </location>
    <ligand>
        <name>substrate</name>
    </ligand>
</feature>
<feature type="binding site" evidence="1">
    <location>
        <position position="154"/>
    </location>
    <ligand>
        <name>substrate</name>
    </ligand>
</feature>
<feature type="binding site" evidence="1">
    <location>
        <position position="205"/>
    </location>
    <ligand>
        <name>ATP</name>
        <dbReference type="ChEBI" id="CHEBI:30616"/>
    </ligand>
</feature>
<feature type="binding site" evidence="1">
    <location>
        <position position="296"/>
    </location>
    <ligand>
        <name>ATP</name>
        <dbReference type="ChEBI" id="CHEBI:30616"/>
    </ligand>
</feature>
<feature type="binding site" evidence="1">
    <location>
        <position position="327"/>
    </location>
    <ligand>
        <name>ATP</name>
        <dbReference type="ChEBI" id="CHEBI:30616"/>
    </ligand>
</feature>
<feature type="binding site" evidence="1">
    <location>
        <begin position="353"/>
        <end position="356"/>
    </location>
    <ligand>
        <name>ATP</name>
        <dbReference type="ChEBI" id="CHEBI:30616"/>
    </ligand>
</feature>
<comment type="catalytic activity">
    <reaction evidence="1">
        <text>(2R)-3-phosphoglycerate + ATP = (2R)-3-phospho-glyceroyl phosphate + ADP</text>
        <dbReference type="Rhea" id="RHEA:14801"/>
        <dbReference type="ChEBI" id="CHEBI:30616"/>
        <dbReference type="ChEBI" id="CHEBI:57604"/>
        <dbReference type="ChEBI" id="CHEBI:58272"/>
        <dbReference type="ChEBI" id="CHEBI:456216"/>
        <dbReference type="EC" id="2.7.2.3"/>
    </reaction>
</comment>
<comment type="pathway">
    <text evidence="1">Carbohydrate degradation; glycolysis; pyruvate from D-glyceraldehyde 3-phosphate: step 2/5.</text>
</comment>
<comment type="subunit">
    <text evidence="1">Monomer.</text>
</comment>
<comment type="subcellular location">
    <subcellularLocation>
        <location evidence="1">Cytoplasm</location>
    </subcellularLocation>
</comment>
<comment type="similarity">
    <text evidence="1">Belongs to the phosphoglycerate kinase family.</text>
</comment>
<protein>
    <recommendedName>
        <fullName evidence="1">Phosphoglycerate kinase</fullName>
        <ecNumber evidence="1">2.7.2.3</ecNumber>
    </recommendedName>
</protein>
<dbReference type="EC" id="2.7.2.3" evidence="1"/>
<dbReference type="EMBL" id="CP000251">
    <property type="protein sequence ID" value="ABC81304.1"/>
    <property type="molecule type" value="Genomic_DNA"/>
</dbReference>
<dbReference type="RefSeq" id="WP_011420587.1">
    <property type="nucleotide sequence ID" value="NC_007760.1"/>
</dbReference>
<dbReference type="SMR" id="Q2II25"/>
<dbReference type="STRING" id="290397.Adeh_1531"/>
<dbReference type="KEGG" id="ade:Adeh_1531"/>
<dbReference type="eggNOG" id="COG0126">
    <property type="taxonomic scope" value="Bacteria"/>
</dbReference>
<dbReference type="HOGENOM" id="CLU_025427_0_2_7"/>
<dbReference type="OrthoDB" id="9808460at2"/>
<dbReference type="UniPathway" id="UPA00109">
    <property type="reaction ID" value="UER00185"/>
</dbReference>
<dbReference type="Proteomes" id="UP000001935">
    <property type="component" value="Chromosome"/>
</dbReference>
<dbReference type="GO" id="GO:0005829">
    <property type="term" value="C:cytosol"/>
    <property type="evidence" value="ECO:0007669"/>
    <property type="project" value="TreeGrafter"/>
</dbReference>
<dbReference type="GO" id="GO:0043531">
    <property type="term" value="F:ADP binding"/>
    <property type="evidence" value="ECO:0007669"/>
    <property type="project" value="TreeGrafter"/>
</dbReference>
<dbReference type="GO" id="GO:0005524">
    <property type="term" value="F:ATP binding"/>
    <property type="evidence" value="ECO:0007669"/>
    <property type="project" value="UniProtKB-KW"/>
</dbReference>
<dbReference type="GO" id="GO:0004618">
    <property type="term" value="F:phosphoglycerate kinase activity"/>
    <property type="evidence" value="ECO:0007669"/>
    <property type="project" value="UniProtKB-UniRule"/>
</dbReference>
<dbReference type="GO" id="GO:0006094">
    <property type="term" value="P:gluconeogenesis"/>
    <property type="evidence" value="ECO:0007669"/>
    <property type="project" value="TreeGrafter"/>
</dbReference>
<dbReference type="GO" id="GO:0006096">
    <property type="term" value="P:glycolytic process"/>
    <property type="evidence" value="ECO:0007669"/>
    <property type="project" value="UniProtKB-UniRule"/>
</dbReference>
<dbReference type="CDD" id="cd00318">
    <property type="entry name" value="Phosphoglycerate_kinase"/>
    <property type="match status" value="1"/>
</dbReference>
<dbReference type="FunFam" id="3.40.50.1260:FF:000003">
    <property type="entry name" value="Phosphoglycerate kinase"/>
    <property type="match status" value="1"/>
</dbReference>
<dbReference type="FunFam" id="3.40.50.1260:FF:000006">
    <property type="entry name" value="Phosphoglycerate kinase"/>
    <property type="match status" value="1"/>
</dbReference>
<dbReference type="Gene3D" id="3.40.50.1260">
    <property type="entry name" value="Phosphoglycerate kinase, N-terminal domain"/>
    <property type="match status" value="2"/>
</dbReference>
<dbReference type="HAMAP" id="MF_00145">
    <property type="entry name" value="Phosphoglyc_kinase"/>
    <property type="match status" value="1"/>
</dbReference>
<dbReference type="InterPro" id="IPR001576">
    <property type="entry name" value="Phosphoglycerate_kinase"/>
</dbReference>
<dbReference type="InterPro" id="IPR015911">
    <property type="entry name" value="Phosphoglycerate_kinase_CS"/>
</dbReference>
<dbReference type="InterPro" id="IPR015824">
    <property type="entry name" value="Phosphoglycerate_kinase_N"/>
</dbReference>
<dbReference type="InterPro" id="IPR036043">
    <property type="entry name" value="Phosphoglycerate_kinase_sf"/>
</dbReference>
<dbReference type="PANTHER" id="PTHR11406">
    <property type="entry name" value="PHOSPHOGLYCERATE KINASE"/>
    <property type="match status" value="1"/>
</dbReference>
<dbReference type="PANTHER" id="PTHR11406:SF23">
    <property type="entry name" value="PHOSPHOGLYCERATE KINASE 1, CHLOROPLASTIC-RELATED"/>
    <property type="match status" value="1"/>
</dbReference>
<dbReference type="Pfam" id="PF00162">
    <property type="entry name" value="PGK"/>
    <property type="match status" value="1"/>
</dbReference>
<dbReference type="PIRSF" id="PIRSF000724">
    <property type="entry name" value="Pgk"/>
    <property type="match status" value="1"/>
</dbReference>
<dbReference type="PRINTS" id="PR00477">
    <property type="entry name" value="PHGLYCKINASE"/>
</dbReference>
<dbReference type="SUPFAM" id="SSF53748">
    <property type="entry name" value="Phosphoglycerate kinase"/>
    <property type="match status" value="1"/>
</dbReference>
<dbReference type="PROSITE" id="PS00111">
    <property type="entry name" value="PGLYCERATE_KINASE"/>
    <property type="match status" value="1"/>
</dbReference>
<proteinExistence type="inferred from homology"/>
<accession>Q2II25</accession>
<sequence>MALRTIDALDLAGKRVFIRVDFNVPLDPQGKVTDDARIRAALPTIRHAIQAKAKVILASHLGRPKGKPDDRTKLTLEPAAVRLSELLSQDVILADDCVGDGVKKLVRDLKDGHVLLLENLRFHPEEEKNDEAFARELASLADVWVNDAFGTAHRAHASTAGMAKFVKEKAAGFLVQKEVEYLGKALGSPARPFVAIVGGAKVSDKIKVLENLIAKADAVCVGGAMAYTFLKAQGVPVGRSLVEEDKLELARQILERAEARKVDLLLPVDHVCGAEPKETAERVVVNDRAIPDGLMGLDIGPKTLDRYRQRIAGAKTVFWNGPMGLFEQKPWSEGTFGVAKAMAASPAVTVVGGGDSAAAVEQAGLVDKMKHVSTGGGASLEFIEGRELPGVKACEE</sequence>
<reference key="1">
    <citation type="submission" date="2006-01" db="EMBL/GenBank/DDBJ databases">
        <title>Complete sequence of Anaeromyxobacter dehalogenans 2CP-C.</title>
        <authorList>
            <person name="Copeland A."/>
            <person name="Lucas S."/>
            <person name="Lapidus A."/>
            <person name="Barry K."/>
            <person name="Detter J.C."/>
            <person name="Glavina T."/>
            <person name="Hammon N."/>
            <person name="Israni S."/>
            <person name="Pitluck S."/>
            <person name="Brettin T."/>
            <person name="Bruce D."/>
            <person name="Han C."/>
            <person name="Tapia R."/>
            <person name="Gilna P."/>
            <person name="Kiss H."/>
            <person name="Schmutz J."/>
            <person name="Larimer F."/>
            <person name="Land M."/>
            <person name="Kyrpides N."/>
            <person name="Anderson I."/>
            <person name="Sanford R.A."/>
            <person name="Ritalahti K.M."/>
            <person name="Thomas H.S."/>
            <person name="Kirby J.R."/>
            <person name="Zhulin I.B."/>
            <person name="Loeffler F.E."/>
            <person name="Richardson P."/>
        </authorList>
    </citation>
    <scope>NUCLEOTIDE SEQUENCE [LARGE SCALE GENOMIC DNA]</scope>
    <source>
        <strain>2CP-C</strain>
    </source>
</reference>
<gene>
    <name evidence="1" type="primary">pgk</name>
    <name type="ordered locus">Adeh_1531</name>
</gene>
<keyword id="KW-0067">ATP-binding</keyword>
<keyword id="KW-0963">Cytoplasm</keyword>
<keyword id="KW-0324">Glycolysis</keyword>
<keyword id="KW-0418">Kinase</keyword>
<keyword id="KW-0547">Nucleotide-binding</keyword>
<keyword id="KW-1185">Reference proteome</keyword>
<keyword id="KW-0808">Transferase</keyword>
<organism>
    <name type="scientific">Anaeromyxobacter dehalogenans (strain 2CP-C)</name>
    <dbReference type="NCBI Taxonomy" id="290397"/>
    <lineage>
        <taxon>Bacteria</taxon>
        <taxon>Pseudomonadati</taxon>
        <taxon>Myxococcota</taxon>
        <taxon>Myxococcia</taxon>
        <taxon>Myxococcales</taxon>
        <taxon>Cystobacterineae</taxon>
        <taxon>Anaeromyxobacteraceae</taxon>
        <taxon>Anaeromyxobacter</taxon>
    </lineage>
</organism>
<evidence type="ECO:0000255" key="1">
    <source>
        <dbReference type="HAMAP-Rule" id="MF_00145"/>
    </source>
</evidence>